<dbReference type="EMBL" id="BA000016">
    <property type="protein sequence ID" value="BAB80054.1"/>
    <property type="molecule type" value="Genomic_DNA"/>
</dbReference>
<dbReference type="RefSeq" id="WP_011009759.1">
    <property type="nucleotide sequence ID" value="NC_003366.1"/>
</dbReference>
<dbReference type="SMR" id="Q8XNI5"/>
<dbReference type="STRING" id="195102.gene:10489604"/>
<dbReference type="KEGG" id="cpe:CPE0348"/>
<dbReference type="HOGENOM" id="CLU_001370_0_2_9"/>
<dbReference type="Proteomes" id="UP000000818">
    <property type="component" value="Chromosome"/>
</dbReference>
<dbReference type="GO" id="GO:0005737">
    <property type="term" value="C:cytoplasm"/>
    <property type="evidence" value="ECO:0007669"/>
    <property type="project" value="UniProtKB-SubCell"/>
</dbReference>
<dbReference type="GO" id="GO:0009380">
    <property type="term" value="C:excinuclease repair complex"/>
    <property type="evidence" value="ECO:0007669"/>
    <property type="project" value="InterPro"/>
</dbReference>
<dbReference type="GO" id="GO:0005524">
    <property type="term" value="F:ATP binding"/>
    <property type="evidence" value="ECO:0007669"/>
    <property type="project" value="UniProtKB-UniRule"/>
</dbReference>
<dbReference type="GO" id="GO:0016887">
    <property type="term" value="F:ATP hydrolysis activity"/>
    <property type="evidence" value="ECO:0007669"/>
    <property type="project" value="InterPro"/>
</dbReference>
<dbReference type="GO" id="GO:0003677">
    <property type="term" value="F:DNA binding"/>
    <property type="evidence" value="ECO:0007669"/>
    <property type="project" value="UniProtKB-UniRule"/>
</dbReference>
<dbReference type="GO" id="GO:0009381">
    <property type="term" value="F:excinuclease ABC activity"/>
    <property type="evidence" value="ECO:0007669"/>
    <property type="project" value="UniProtKB-UniRule"/>
</dbReference>
<dbReference type="GO" id="GO:0008270">
    <property type="term" value="F:zinc ion binding"/>
    <property type="evidence" value="ECO:0007669"/>
    <property type="project" value="UniProtKB-UniRule"/>
</dbReference>
<dbReference type="GO" id="GO:0006289">
    <property type="term" value="P:nucleotide-excision repair"/>
    <property type="evidence" value="ECO:0007669"/>
    <property type="project" value="UniProtKB-UniRule"/>
</dbReference>
<dbReference type="GO" id="GO:0009432">
    <property type="term" value="P:SOS response"/>
    <property type="evidence" value="ECO:0007669"/>
    <property type="project" value="UniProtKB-UniRule"/>
</dbReference>
<dbReference type="CDD" id="cd03270">
    <property type="entry name" value="ABC_UvrA_I"/>
    <property type="match status" value="1"/>
</dbReference>
<dbReference type="CDD" id="cd03271">
    <property type="entry name" value="ABC_UvrA_II"/>
    <property type="match status" value="1"/>
</dbReference>
<dbReference type="FunFam" id="1.20.1580.10:FF:000002">
    <property type="entry name" value="UvrABC system protein A"/>
    <property type="match status" value="1"/>
</dbReference>
<dbReference type="Gene3D" id="1.10.8.280">
    <property type="entry name" value="ABC transporter ATPase domain-like"/>
    <property type="match status" value="1"/>
</dbReference>
<dbReference type="Gene3D" id="1.20.1580.10">
    <property type="entry name" value="ABC transporter ATPase like domain"/>
    <property type="match status" value="2"/>
</dbReference>
<dbReference type="Gene3D" id="3.30.1490.20">
    <property type="entry name" value="ATP-grasp fold, A domain"/>
    <property type="match status" value="1"/>
</dbReference>
<dbReference type="Gene3D" id="3.40.50.300">
    <property type="entry name" value="P-loop containing nucleotide triphosphate hydrolases"/>
    <property type="match status" value="2"/>
</dbReference>
<dbReference type="HAMAP" id="MF_00205">
    <property type="entry name" value="UvrA"/>
    <property type="match status" value="1"/>
</dbReference>
<dbReference type="InterPro" id="IPR003593">
    <property type="entry name" value="AAA+_ATPase"/>
</dbReference>
<dbReference type="InterPro" id="IPR003439">
    <property type="entry name" value="ABC_transporter-like_ATP-bd"/>
</dbReference>
<dbReference type="InterPro" id="IPR017871">
    <property type="entry name" value="ABC_transporter-like_CS"/>
</dbReference>
<dbReference type="InterPro" id="IPR013815">
    <property type="entry name" value="ATP_grasp_subdomain_1"/>
</dbReference>
<dbReference type="InterPro" id="IPR027417">
    <property type="entry name" value="P-loop_NTPase"/>
</dbReference>
<dbReference type="InterPro" id="IPR004602">
    <property type="entry name" value="UvrA"/>
</dbReference>
<dbReference type="InterPro" id="IPR041552">
    <property type="entry name" value="UvrA_DNA-bd"/>
</dbReference>
<dbReference type="InterPro" id="IPR041102">
    <property type="entry name" value="UvrA_inter"/>
</dbReference>
<dbReference type="NCBIfam" id="NF001503">
    <property type="entry name" value="PRK00349.1"/>
    <property type="match status" value="1"/>
</dbReference>
<dbReference type="NCBIfam" id="TIGR00630">
    <property type="entry name" value="uvra"/>
    <property type="match status" value="1"/>
</dbReference>
<dbReference type="PANTHER" id="PTHR43152">
    <property type="entry name" value="UVRABC SYSTEM PROTEIN A"/>
    <property type="match status" value="1"/>
</dbReference>
<dbReference type="PANTHER" id="PTHR43152:SF3">
    <property type="entry name" value="UVRABC SYSTEM PROTEIN A"/>
    <property type="match status" value="1"/>
</dbReference>
<dbReference type="Pfam" id="PF17755">
    <property type="entry name" value="UvrA_DNA-bind"/>
    <property type="match status" value="1"/>
</dbReference>
<dbReference type="Pfam" id="PF17760">
    <property type="entry name" value="UvrA_inter"/>
    <property type="match status" value="1"/>
</dbReference>
<dbReference type="SMART" id="SM00382">
    <property type="entry name" value="AAA"/>
    <property type="match status" value="1"/>
</dbReference>
<dbReference type="SUPFAM" id="SSF52540">
    <property type="entry name" value="P-loop containing nucleoside triphosphate hydrolases"/>
    <property type="match status" value="2"/>
</dbReference>
<dbReference type="PROSITE" id="PS00211">
    <property type="entry name" value="ABC_TRANSPORTER_1"/>
    <property type="match status" value="1"/>
</dbReference>
<dbReference type="PROSITE" id="PS50893">
    <property type="entry name" value="ABC_TRANSPORTER_2"/>
    <property type="match status" value="2"/>
</dbReference>
<organism>
    <name type="scientific">Clostridium perfringens (strain 13 / Type A)</name>
    <dbReference type="NCBI Taxonomy" id="195102"/>
    <lineage>
        <taxon>Bacteria</taxon>
        <taxon>Bacillati</taxon>
        <taxon>Bacillota</taxon>
        <taxon>Clostridia</taxon>
        <taxon>Eubacteriales</taxon>
        <taxon>Clostridiaceae</taxon>
        <taxon>Clostridium</taxon>
    </lineage>
</organism>
<name>UVRA_CLOPE</name>
<evidence type="ECO:0000255" key="1">
    <source>
        <dbReference type="HAMAP-Rule" id="MF_00205"/>
    </source>
</evidence>
<protein>
    <recommendedName>
        <fullName evidence="1">UvrABC system protein A</fullName>
        <shortName evidence="1">UvrA protein</shortName>
    </recommendedName>
    <alternativeName>
        <fullName evidence="1">Excinuclease ABC subunit A</fullName>
    </alternativeName>
</protein>
<sequence length="939" mass="104727">MKDKIIVKGAKVHNLKNVSLEIPRDKLIVFTGLSGSGKSSLAFDTIYAEGQRRYVESLSSYARQFLGQMDKPDVESIEGLSPAISIDQKTTSRNPRSTVGTVTEIYDYLRLLYARVGVPHCPKCGKEITQQSVDQIVDQIMELPERSKIMILAPIIRGRKGTHEKVLENIKKQGFVRARIDGEIYDLTEDEIKLEKNIKHNIEAVVDRIIVKDGIEGRLTDSIETSLKMAEGLVLVNIIGEEDRLYSEHFACADCGISIDELAPRMFSFNSPFGKCERCDGLGTLMEIDEDLVVPNKDLSIRGGAISTWGDSRMKEESWTYCVLKALMEKYNFDLDTPYKDLPKKVQEVLMYGEPEKLKVTYTKENVTAVYNHSFEGEINNLRRRYMETNSDTMKAEIEKYMSDNPCPKCKGARLKPEALAVTVGGKNIFEFTSMAIREELDFINSINFSEKDKIISSQIIKEIQSRLSFLINVGLDYLDLARKAGTLSGGEAQRIRLATQIGSQLMGVLYILDEPSIGLHQRDNDRLISTLKQLRDVGNTLIVVEHDEDTMREADYIVDIGPGAGEHGGKIVASGTLDEIMSNENSLTGKYLTGAKKVELPEERRKGNGNFITVKGAKENNLKNVTAKFPLGTLTMVTGVSGSGKSTLVNEILYKGLNKIVNKAKDLPGKFKEITGYENIDKIIDIDQSPIGRTPRSNPATYTGTFDIIRELFSQTQEAKMRGYKPGRFSFNVKGGRCEACSGDGIIKIEMQFLSDVYVPCEVCKGKRYNRETLEVKYKGKNIADVLNMTVEEALEFFENIPRIKNKLQTLMDVGLGYIRLGQPSTQLSGGEAQRIKLAYELSKRSTGKTLYILDEPTTGLHIHDVNRLVKILQRLVDGGNTVIVIEHNLDMIKCADYIVDLGPEGGDKGGTIIATGTPEKIAGAKESYTGKYLKKYL</sequence>
<proteinExistence type="inferred from homology"/>
<keyword id="KW-0067">ATP-binding</keyword>
<keyword id="KW-0963">Cytoplasm</keyword>
<keyword id="KW-0227">DNA damage</keyword>
<keyword id="KW-0228">DNA excision</keyword>
<keyword id="KW-0234">DNA repair</keyword>
<keyword id="KW-0238">DNA-binding</keyword>
<keyword id="KW-0267">Excision nuclease</keyword>
<keyword id="KW-0479">Metal-binding</keyword>
<keyword id="KW-0547">Nucleotide-binding</keyword>
<keyword id="KW-1185">Reference proteome</keyword>
<keyword id="KW-0677">Repeat</keyword>
<keyword id="KW-0742">SOS response</keyword>
<keyword id="KW-0862">Zinc</keyword>
<keyword id="KW-0863">Zinc-finger</keyword>
<gene>
    <name evidence="1" type="primary">uvrA</name>
    <name type="ordered locus">CPE0348</name>
</gene>
<accession>Q8XNI5</accession>
<reference key="1">
    <citation type="journal article" date="2002" name="Proc. Natl. Acad. Sci. U.S.A.">
        <title>Complete genome sequence of Clostridium perfringens, an anaerobic flesh-eater.</title>
        <authorList>
            <person name="Shimizu T."/>
            <person name="Ohtani K."/>
            <person name="Hirakawa H."/>
            <person name="Ohshima K."/>
            <person name="Yamashita A."/>
            <person name="Shiba T."/>
            <person name="Ogasawara N."/>
            <person name="Hattori M."/>
            <person name="Kuhara S."/>
            <person name="Hayashi H."/>
        </authorList>
    </citation>
    <scope>NUCLEOTIDE SEQUENCE [LARGE SCALE GENOMIC DNA]</scope>
    <source>
        <strain>13 / Type A</strain>
    </source>
</reference>
<feature type="chain" id="PRO_0000093046" description="UvrABC system protein A">
    <location>
        <begin position="1"/>
        <end position="939"/>
    </location>
</feature>
<feature type="domain" description="ABC transporter 1" evidence="1">
    <location>
        <begin position="309"/>
        <end position="588"/>
    </location>
</feature>
<feature type="domain" description="ABC transporter 2" evidence="1">
    <location>
        <begin position="608"/>
        <end position="936"/>
    </location>
</feature>
<feature type="zinc finger region" description="C4-type" evidence="1">
    <location>
        <begin position="252"/>
        <end position="279"/>
    </location>
</feature>
<feature type="zinc finger region" description="C4-type" evidence="1">
    <location>
        <begin position="739"/>
        <end position="765"/>
    </location>
</feature>
<feature type="binding site" evidence="1">
    <location>
        <begin position="32"/>
        <end position="39"/>
    </location>
    <ligand>
        <name>ATP</name>
        <dbReference type="ChEBI" id="CHEBI:30616"/>
    </ligand>
</feature>
<feature type="binding site" evidence="1">
    <location>
        <begin position="640"/>
        <end position="647"/>
    </location>
    <ligand>
        <name>ATP</name>
        <dbReference type="ChEBI" id="CHEBI:30616"/>
    </ligand>
</feature>
<comment type="function">
    <text evidence="1">The UvrABC repair system catalyzes the recognition and processing of DNA lesions. UvrA is an ATPase and a DNA-binding protein. A damage recognition complex composed of 2 UvrA and 2 UvrB subunits scans DNA for abnormalities. When the presence of a lesion has been verified by UvrB, the UvrA molecules dissociate.</text>
</comment>
<comment type="subunit">
    <text evidence="1">Forms a heterotetramer with UvrB during the search for lesions.</text>
</comment>
<comment type="subcellular location">
    <subcellularLocation>
        <location evidence="1">Cytoplasm</location>
    </subcellularLocation>
</comment>
<comment type="similarity">
    <text evidence="1">Belongs to the ABC transporter superfamily. UvrA family.</text>
</comment>